<reference key="1">
    <citation type="journal article" date="1991" name="J. Gen. Microbiol.">
        <title>Molecular and evolutionary relationships among enteric bacteria.</title>
        <authorList>
            <person name="Lawrence J.G."/>
            <person name="Ochman H."/>
            <person name="Hartl D.L."/>
        </authorList>
    </citation>
    <scope>NUCLEOTIDE SEQUENCE [GENOMIC DNA]</scope>
    <source>
        <strain>ATCC 33429 / CDC 1182-73</strain>
        <strain>ATCC 33430 / CDC 2928-78</strain>
    </source>
</reference>
<dbReference type="EMBL" id="M63344">
    <property type="protein sequence ID" value="AAA24239.1"/>
    <property type="molecule type" value="Genomic_DNA"/>
</dbReference>
<dbReference type="EMBL" id="M63345">
    <property type="protein sequence ID" value="AAA24242.1"/>
    <property type="molecule type" value="Genomic_DNA"/>
</dbReference>
<dbReference type="PIR" id="I62391">
    <property type="entry name" value="I62391"/>
</dbReference>
<dbReference type="PIR" id="I62394">
    <property type="entry name" value="I62394"/>
</dbReference>
<dbReference type="SMR" id="P0DJO6"/>
<dbReference type="GO" id="GO:0009279">
    <property type="term" value="C:cell outer membrane"/>
    <property type="evidence" value="ECO:0007669"/>
    <property type="project" value="UniProtKB-SubCell"/>
</dbReference>
<dbReference type="GO" id="GO:0046930">
    <property type="term" value="C:pore complex"/>
    <property type="evidence" value="ECO:0007669"/>
    <property type="project" value="UniProtKB-KW"/>
</dbReference>
<dbReference type="GO" id="GO:0015288">
    <property type="term" value="F:porin activity"/>
    <property type="evidence" value="ECO:0007669"/>
    <property type="project" value="UniProtKB-KW"/>
</dbReference>
<dbReference type="GO" id="GO:0006811">
    <property type="term" value="P:monoatomic ion transport"/>
    <property type="evidence" value="ECO:0007669"/>
    <property type="project" value="UniProtKB-KW"/>
</dbReference>
<dbReference type="CDD" id="cd07185">
    <property type="entry name" value="OmpA_C-like"/>
    <property type="match status" value="1"/>
</dbReference>
<dbReference type="FunFam" id="3.30.1330.60:FF:000004">
    <property type="entry name" value="Outer membrane protein A"/>
    <property type="match status" value="1"/>
</dbReference>
<dbReference type="Gene3D" id="2.40.160.20">
    <property type="match status" value="1"/>
</dbReference>
<dbReference type="Gene3D" id="3.30.1330.60">
    <property type="entry name" value="OmpA-like domain"/>
    <property type="match status" value="1"/>
</dbReference>
<dbReference type="InterPro" id="IPR050330">
    <property type="entry name" value="Bact_OuterMem_StrucFunc"/>
</dbReference>
<dbReference type="InterPro" id="IPR011250">
    <property type="entry name" value="OMP/PagP_b-brl"/>
</dbReference>
<dbReference type="InterPro" id="IPR006664">
    <property type="entry name" value="OMP_bac"/>
</dbReference>
<dbReference type="InterPro" id="IPR002368">
    <property type="entry name" value="OmpA"/>
</dbReference>
<dbReference type="InterPro" id="IPR006665">
    <property type="entry name" value="OmpA-like"/>
</dbReference>
<dbReference type="InterPro" id="IPR006690">
    <property type="entry name" value="OMPA-like_CS"/>
</dbReference>
<dbReference type="InterPro" id="IPR036737">
    <property type="entry name" value="OmpA-like_sf"/>
</dbReference>
<dbReference type="InterPro" id="IPR000498">
    <property type="entry name" value="OmpA-like_TM_dom"/>
</dbReference>
<dbReference type="NCBIfam" id="NF008071">
    <property type="entry name" value="PRK10808.1"/>
    <property type="match status" value="1"/>
</dbReference>
<dbReference type="PANTHER" id="PTHR30329:SF21">
    <property type="entry name" value="LIPOPROTEIN YIAD-RELATED"/>
    <property type="match status" value="1"/>
</dbReference>
<dbReference type="PANTHER" id="PTHR30329">
    <property type="entry name" value="STATOR ELEMENT OF FLAGELLAR MOTOR COMPLEX"/>
    <property type="match status" value="1"/>
</dbReference>
<dbReference type="Pfam" id="PF00691">
    <property type="entry name" value="OmpA"/>
    <property type="match status" value="1"/>
</dbReference>
<dbReference type="Pfam" id="PF01389">
    <property type="entry name" value="OmpA_membrane"/>
    <property type="match status" value="1"/>
</dbReference>
<dbReference type="PRINTS" id="PR01021">
    <property type="entry name" value="OMPADOMAIN"/>
</dbReference>
<dbReference type="PRINTS" id="PR01022">
    <property type="entry name" value="OUTRMMBRANEA"/>
</dbReference>
<dbReference type="SUPFAM" id="SSF56925">
    <property type="entry name" value="OMPA-like"/>
    <property type="match status" value="1"/>
</dbReference>
<dbReference type="SUPFAM" id="SSF103088">
    <property type="entry name" value="OmpA-like"/>
    <property type="match status" value="1"/>
</dbReference>
<dbReference type="PROSITE" id="PS01068">
    <property type="entry name" value="OMPA_1"/>
    <property type="match status" value="1"/>
</dbReference>
<dbReference type="PROSITE" id="PS51123">
    <property type="entry name" value="OMPA_2"/>
    <property type="match status" value="1"/>
</dbReference>
<gene>
    <name evidence="1" type="primary">ompA</name>
</gene>
<organism>
    <name type="scientific">Shimwellia blattae</name>
    <name type="common">Escherichia blattae</name>
    <dbReference type="NCBI Taxonomy" id="563"/>
    <lineage>
        <taxon>Bacteria</taxon>
        <taxon>Pseudomonadati</taxon>
        <taxon>Pseudomonadota</taxon>
        <taxon>Gammaproteobacteria</taxon>
        <taxon>Enterobacterales</taxon>
        <taxon>Enterobacteriaceae</taxon>
        <taxon>Shimwellia</taxon>
    </lineage>
</organism>
<evidence type="ECO:0000250" key="1">
    <source>
        <dbReference type="UniProtKB" id="P0A910"/>
    </source>
</evidence>
<evidence type="ECO:0000255" key="2">
    <source>
        <dbReference type="PROSITE-ProRule" id="PRU00473"/>
    </source>
</evidence>
<evidence type="ECO:0000303" key="3">
    <source>
    </source>
</evidence>
<evidence type="ECO:0000305" key="4"/>
<proteinExistence type="inferred from homology"/>
<protein>
    <recommendedName>
        <fullName evidence="1">Outer membrane protein A</fullName>
    </recommendedName>
    <alternativeName>
        <fullName evidence="1">Outer membrane porin A</fullName>
    </alternativeName>
    <alternativeName>
        <fullName evidence="3">Outer membrane protein 3A</fullName>
    </alternativeName>
</protein>
<comment type="function">
    <text evidence="1">With TolR probably plays a role in maintaining the position of the peptidoglycan cell wall in the periplasm. Acts as a porin with low permeability that allows slow penetration of small solutes; an internal gate slows down solute passage.</text>
</comment>
<comment type="subunit">
    <text evidence="1">Monomer and homodimer.</text>
</comment>
<comment type="subcellular location">
    <subcellularLocation>
        <location evidence="1">Cell outer membrane</location>
        <topology evidence="1">Multi-pass membrane protein</topology>
    </subcellularLocation>
</comment>
<comment type="domain">
    <text evidence="1">The extracellular loops are most variable in sequence, and in some bacteria confer sensitivity to phage and/or colicins.</text>
</comment>
<comment type="similarity">
    <text evidence="4">Belongs to the outer membrane OOP (TC 1.B.6) superfamily. OmpA family.</text>
</comment>
<name>OMPA_SHIBL</name>
<feature type="chain" id="PRO_0000196253" description="Outer membrane protein A">
    <location>
        <begin position="1" status="less than"/>
        <end position="241" status="greater than"/>
    </location>
</feature>
<feature type="transmembrane region" description="Beta stranded" evidence="1">
    <location>
        <begin position="1" status="less than"/>
        <end position="8"/>
    </location>
</feature>
<feature type="transmembrane region" description="Beta stranded" evidence="1">
    <location>
        <begin position="13"/>
        <end position="21"/>
    </location>
</feature>
<feature type="transmembrane region" description="Beta stranded" evidence="1">
    <location>
        <begin position="46"/>
        <end position="55"/>
    </location>
</feature>
<feature type="transmembrane region" description="Beta stranded" evidence="1">
    <location>
        <begin position="60"/>
        <end position="67"/>
    </location>
</feature>
<feature type="transmembrane region" description="Beta stranded" evidence="1">
    <location>
        <begin position="86"/>
        <end position="94"/>
    </location>
</feature>
<feature type="repeat" description="1">
    <location>
        <begin position="105"/>
        <end position="106"/>
    </location>
</feature>
<feature type="repeat" description="2">
    <location>
        <begin position="107"/>
        <end position="108"/>
    </location>
</feature>
<feature type="repeat" description="3">
    <location>
        <begin position="109"/>
        <end position="110"/>
    </location>
</feature>
<feature type="repeat" description="4">
    <location>
        <begin position="111"/>
        <end position="112"/>
    </location>
</feature>
<feature type="domain" description="OmpA-like" evidence="2">
    <location>
        <begin position="114"/>
        <end position="241" status="greater than"/>
    </location>
</feature>
<feature type="region of interest" description="4 X 2 AA tandem repeats of A-P">
    <location>
        <begin position="105"/>
        <end position="112"/>
    </location>
</feature>
<feature type="site" description="Part of salt bridge gating mechanism" evidence="1">
    <location>
        <position position="63"/>
    </location>
</feature>
<feature type="disulfide bond" evidence="1">
    <location>
        <begin position="215"/>
        <end position="227"/>
    </location>
</feature>
<feature type="sequence variant" description="In strain: ATCC 33430.">
    <original>G</original>
    <variation>V</variation>
    <location>
        <position position="33"/>
    </location>
</feature>
<feature type="sequence variant" description="In strain: ATCC 33430.">
    <original>W</original>
    <variation>M</variation>
    <location>
        <position position="56"/>
    </location>
</feature>
<feature type="sequence variant" description="In strain: ATCC 33430.">
    <location>
        <position position="100"/>
    </location>
</feature>
<feature type="non-terminal residue">
    <location>
        <position position="1"/>
    </location>
</feature>
<feature type="non-terminal residue">
    <location>
        <position position="241"/>
    </location>
</feature>
<sequence length="241" mass="25917">LTAKLSYPIYDDLDIYTRLGGMVWRADAKNNVGGGDRSNHDTGVSPVFAGGVEYAWTPSIATRLEYQWINNIGDAGTVGTRPDNGMLSVGVSYRFGQDEAAPVVAPAPAPAPQVQTKHFTLKSDVLFNFNKSTLKPEGQQALDQLYTQLSNLDPKDGAVVVLGYTDRIGSDAYNQRLSQQRAQSVVDYLVSKGIPAGKITAQGQGESNPVTGSTCDNVKQRAALIDCLAPDRRVEIEVKGV</sequence>
<accession>P0DJO6</accession>
<accession>Q03617</accession>
<accession>Q99124</accession>
<keyword id="KW-0998">Cell outer membrane</keyword>
<keyword id="KW-1015">Disulfide bond</keyword>
<keyword id="KW-0406">Ion transport</keyword>
<keyword id="KW-0472">Membrane</keyword>
<keyword id="KW-0626">Porin</keyword>
<keyword id="KW-0677">Repeat</keyword>
<keyword id="KW-0812">Transmembrane</keyword>
<keyword id="KW-1134">Transmembrane beta strand</keyword>
<keyword id="KW-0813">Transport</keyword>